<feature type="chain" id="PRO_0000186623" description="PTS system mannitol-specific EIICB component">
    <location>
        <begin position="1"/>
        <end position="512"/>
    </location>
</feature>
<feature type="topological domain" description="Cytoplasmic" evidence="1">
    <location>
        <begin position="1"/>
        <end position="28"/>
    </location>
</feature>
<feature type="transmembrane region" description="Helical" evidence="1">
    <location>
        <begin position="29"/>
        <end position="50"/>
    </location>
</feature>
<feature type="topological domain" description="Extracellular" evidence="1">
    <location>
        <begin position="51"/>
        <end position="54"/>
    </location>
</feature>
<feature type="transmembrane region" description="Helical" evidence="1">
    <location>
        <begin position="55"/>
        <end position="75"/>
    </location>
</feature>
<feature type="topological domain" description="Cytoplasmic" evidence="1">
    <location>
        <begin position="76"/>
        <end position="139"/>
    </location>
</feature>
<feature type="transmembrane region" description="Helical" evidence="1">
    <location>
        <begin position="140"/>
        <end position="161"/>
    </location>
</feature>
<feature type="topological domain" description="Extracellular" evidence="1">
    <location>
        <begin position="162"/>
        <end position="170"/>
    </location>
</feature>
<feature type="transmembrane region" description="Helical" evidence="1">
    <location>
        <begin position="171"/>
        <end position="191"/>
    </location>
</feature>
<feature type="topological domain" description="Cytoplasmic" evidence="1">
    <location>
        <begin position="192"/>
        <end position="278"/>
    </location>
</feature>
<feature type="transmembrane region" description="Helical" evidence="1">
    <location>
        <begin position="279"/>
        <end position="298"/>
    </location>
</feature>
<feature type="topological domain" description="Extracellular" evidence="1">
    <location>
        <begin position="299"/>
        <end position="318"/>
    </location>
</feature>
<feature type="transmembrane region" description="Helical" evidence="1">
    <location>
        <begin position="319"/>
        <end position="340"/>
    </location>
</feature>
<feature type="topological domain" description="Cytoplasmic" evidence="1">
    <location>
        <begin position="341"/>
        <end position="512"/>
    </location>
</feature>
<feature type="domain" description="PTS EIIC type-2" evidence="4">
    <location>
        <begin position="17"/>
        <end position="349"/>
    </location>
</feature>
<feature type="domain" description="PTS EIIB type-2" evidence="3">
    <location>
        <begin position="419"/>
        <end position="512"/>
    </location>
</feature>
<feature type="region of interest" description="Disordered" evidence="5">
    <location>
        <begin position="365"/>
        <end position="401"/>
    </location>
</feature>
<feature type="compositionally biased region" description="Low complexity" evidence="5">
    <location>
        <begin position="365"/>
        <end position="376"/>
    </location>
</feature>
<feature type="compositionally biased region" description="Polar residues" evidence="5">
    <location>
        <begin position="380"/>
        <end position="392"/>
    </location>
</feature>
<feature type="active site" description="Phosphocysteine intermediate; for EIIB activity" evidence="1 2">
    <location>
        <position position="425"/>
    </location>
</feature>
<feature type="modified residue" description="Phosphocysteine; by EIIA" evidence="1 2 3">
    <location>
        <position position="425"/>
    </location>
</feature>
<sequence>MSQTEEKKGIGRRVQAFGSFLSSMIMPNIGAFIAWGFIAAIFIDNGWFPNKDLATLAGPMITYLIPLLIAFSGGRLIYDLRGGIIAATATMGVIVALPDTPMLLGAMIMGPLVGWLMKKTDQLIQPRTPQGFEMLFNNFSAGILGFIMTIAGFKILAPLMKFIMHILSVAVEALVHAHLLPLVSILVEPAKIVFLNNAINHGVFTPLGADQAAKAGQSILYTIESNPGPGLGILLAYMIFGKGTAKATSYGAGIIHFFGGIHEIYFPYVLMRPLLFIAVILGGMTGVATYQATGFGFKSPASPGSFIVYCLNAPRGEFLHMLLGVFLATLVSFVVAALIMKFTKEPKQDLEAATAQMETTKGKKSSVASKLVSSDKNVNTEENASGNVSETSSLDDDPEALLDNYNTEDVDAHNYNNINHVIFACDAGMGSSAMGASMLRNKFKKAGINDITVTNTAINQLPKDAQLVITQKKLTDRAIKQTPNAIHISVDNFLNSPRYEELLNNLKKDDQA</sequence>
<reference key="1">
    <citation type="journal article" date="2004" name="Proc. Natl. Acad. Sci. U.S.A.">
        <title>Complete genomes of two clinical Staphylococcus aureus strains: evidence for the rapid evolution of virulence and drug resistance.</title>
        <authorList>
            <person name="Holden M.T.G."/>
            <person name="Feil E.J."/>
            <person name="Lindsay J.A."/>
            <person name="Peacock S.J."/>
            <person name="Day N.P.J."/>
            <person name="Enright M.C."/>
            <person name="Foster T.J."/>
            <person name="Moore C.E."/>
            <person name="Hurst L."/>
            <person name="Atkin R."/>
            <person name="Barron A."/>
            <person name="Bason N."/>
            <person name="Bentley S.D."/>
            <person name="Chillingworth C."/>
            <person name="Chillingworth T."/>
            <person name="Churcher C."/>
            <person name="Clark L."/>
            <person name="Corton C."/>
            <person name="Cronin A."/>
            <person name="Doggett J."/>
            <person name="Dowd L."/>
            <person name="Feltwell T."/>
            <person name="Hance Z."/>
            <person name="Harris B."/>
            <person name="Hauser H."/>
            <person name="Holroyd S."/>
            <person name="Jagels K."/>
            <person name="James K.D."/>
            <person name="Lennard N."/>
            <person name="Line A."/>
            <person name="Mayes R."/>
            <person name="Moule S."/>
            <person name="Mungall K."/>
            <person name="Ormond D."/>
            <person name="Quail M.A."/>
            <person name="Rabbinowitsch E."/>
            <person name="Rutherford K.M."/>
            <person name="Sanders M."/>
            <person name="Sharp S."/>
            <person name="Simmonds M."/>
            <person name="Stevens K."/>
            <person name="Whitehead S."/>
            <person name="Barrell B.G."/>
            <person name="Spratt B.G."/>
            <person name="Parkhill J."/>
        </authorList>
    </citation>
    <scope>NUCLEOTIDE SEQUENCE [LARGE SCALE GENOMIC DNA]</scope>
    <source>
        <strain>MRSA252</strain>
    </source>
</reference>
<keyword id="KW-1003">Cell membrane</keyword>
<keyword id="KW-0418">Kinase</keyword>
<keyword id="KW-0472">Membrane</keyword>
<keyword id="KW-0597">Phosphoprotein</keyword>
<keyword id="KW-0598">Phosphotransferase system</keyword>
<keyword id="KW-0762">Sugar transport</keyword>
<keyword id="KW-0808">Transferase</keyword>
<keyword id="KW-0812">Transmembrane</keyword>
<keyword id="KW-1133">Transmembrane helix</keyword>
<keyword id="KW-0813">Transport</keyword>
<accession>Q6GES1</accession>
<gene>
    <name type="primary">mtlA</name>
    <name type="ordered locus">SAR2244</name>
</gene>
<evidence type="ECO:0000250" key="1">
    <source>
        <dbReference type="UniProtKB" id="P00550"/>
    </source>
</evidence>
<evidence type="ECO:0000250" key="2">
    <source>
        <dbReference type="UniProtKB" id="P28008"/>
    </source>
</evidence>
<evidence type="ECO:0000255" key="3">
    <source>
        <dbReference type="PROSITE-ProRule" id="PRU00422"/>
    </source>
</evidence>
<evidence type="ECO:0000255" key="4">
    <source>
        <dbReference type="PROSITE-ProRule" id="PRU00427"/>
    </source>
</evidence>
<evidence type="ECO:0000256" key="5">
    <source>
        <dbReference type="SAM" id="MobiDB-lite"/>
    </source>
</evidence>
<organism>
    <name type="scientific">Staphylococcus aureus (strain MRSA252)</name>
    <dbReference type="NCBI Taxonomy" id="282458"/>
    <lineage>
        <taxon>Bacteria</taxon>
        <taxon>Bacillati</taxon>
        <taxon>Bacillota</taxon>
        <taxon>Bacilli</taxon>
        <taxon>Bacillales</taxon>
        <taxon>Staphylococcaceae</taxon>
        <taxon>Staphylococcus</taxon>
    </lineage>
</organism>
<dbReference type="EC" id="2.7.1.197" evidence="1 2"/>
<dbReference type="EMBL" id="BX571856">
    <property type="protein sequence ID" value="CAG41225.1"/>
    <property type="molecule type" value="Genomic_DNA"/>
</dbReference>
<dbReference type="RefSeq" id="WP_000083795.1">
    <property type="nucleotide sequence ID" value="NC_002952.2"/>
</dbReference>
<dbReference type="SMR" id="Q6GES1"/>
<dbReference type="KEGG" id="sar:SAR2244"/>
<dbReference type="HOGENOM" id="CLU_028721_2_1_9"/>
<dbReference type="Proteomes" id="UP000000596">
    <property type="component" value="Chromosome"/>
</dbReference>
<dbReference type="GO" id="GO:0005886">
    <property type="term" value="C:plasma membrane"/>
    <property type="evidence" value="ECO:0007669"/>
    <property type="project" value="UniProtKB-SubCell"/>
</dbReference>
<dbReference type="GO" id="GO:0016301">
    <property type="term" value="F:kinase activity"/>
    <property type="evidence" value="ECO:0007669"/>
    <property type="project" value="UniProtKB-KW"/>
</dbReference>
<dbReference type="GO" id="GO:0022872">
    <property type="term" value="F:protein-N(PI)-phosphohistidine-mannitol phosphotransferase system transmembrane transporter activity"/>
    <property type="evidence" value="ECO:0007669"/>
    <property type="project" value="InterPro"/>
</dbReference>
<dbReference type="GO" id="GO:0090563">
    <property type="term" value="F:protein-phosphocysteine-sugar phosphotransferase activity"/>
    <property type="evidence" value="ECO:0007669"/>
    <property type="project" value="TreeGrafter"/>
</dbReference>
<dbReference type="GO" id="GO:0009401">
    <property type="term" value="P:phosphoenolpyruvate-dependent sugar phosphotransferase system"/>
    <property type="evidence" value="ECO:0007669"/>
    <property type="project" value="UniProtKB-KW"/>
</dbReference>
<dbReference type="CDD" id="cd05567">
    <property type="entry name" value="PTS_IIB_mannitol"/>
    <property type="match status" value="1"/>
</dbReference>
<dbReference type="FunFam" id="3.40.50.2300:FF:000047">
    <property type="entry name" value="PTS system mannitol-specific transporter subunit IICBA"/>
    <property type="match status" value="1"/>
</dbReference>
<dbReference type="Gene3D" id="3.40.50.2300">
    <property type="match status" value="1"/>
</dbReference>
<dbReference type="InterPro" id="IPR036095">
    <property type="entry name" value="PTS_EIIB-like_sf"/>
</dbReference>
<dbReference type="InterPro" id="IPR013011">
    <property type="entry name" value="PTS_EIIB_2"/>
</dbReference>
<dbReference type="InterPro" id="IPR003501">
    <property type="entry name" value="PTS_EIIB_2/3"/>
</dbReference>
<dbReference type="InterPro" id="IPR029503">
    <property type="entry name" value="PTS_EIIB_mannitol"/>
</dbReference>
<dbReference type="InterPro" id="IPR003352">
    <property type="entry name" value="PTS_EIIC"/>
</dbReference>
<dbReference type="InterPro" id="IPR013014">
    <property type="entry name" value="PTS_EIIC_2"/>
</dbReference>
<dbReference type="InterPro" id="IPR004718">
    <property type="entry name" value="PTS_IIC_mtl"/>
</dbReference>
<dbReference type="InterPro" id="IPR050893">
    <property type="entry name" value="Sugar_PTS"/>
</dbReference>
<dbReference type="NCBIfam" id="TIGR00851">
    <property type="entry name" value="mtlA"/>
    <property type="match status" value="1"/>
</dbReference>
<dbReference type="PANTHER" id="PTHR30181">
    <property type="entry name" value="MANNITOL PERMEASE IIC COMPONENT"/>
    <property type="match status" value="1"/>
</dbReference>
<dbReference type="PANTHER" id="PTHR30181:SF2">
    <property type="entry name" value="PTS SYSTEM MANNITOL-SPECIFIC EIICBA COMPONENT"/>
    <property type="match status" value="1"/>
</dbReference>
<dbReference type="Pfam" id="PF02378">
    <property type="entry name" value="PTS_EIIC"/>
    <property type="match status" value="1"/>
</dbReference>
<dbReference type="Pfam" id="PF02302">
    <property type="entry name" value="PTS_IIB"/>
    <property type="match status" value="1"/>
</dbReference>
<dbReference type="SUPFAM" id="SSF52794">
    <property type="entry name" value="PTS system IIB component-like"/>
    <property type="match status" value="1"/>
</dbReference>
<dbReference type="PROSITE" id="PS51099">
    <property type="entry name" value="PTS_EIIB_TYPE_2"/>
    <property type="match status" value="1"/>
</dbReference>
<dbReference type="PROSITE" id="PS51104">
    <property type="entry name" value="PTS_EIIC_TYPE_2"/>
    <property type="match status" value="1"/>
</dbReference>
<name>PTMCB_STAAR</name>
<protein>
    <recommendedName>
        <fullName evidence="2">PTS system mannitol-specific EIICB component</fullName>
    </recommendedName>
    <alternativeName>
        <fullName evidence="2">EIICB-Mtl</fullName>
        <shortName evidence="2">EII-Mtl</shortName>
    </alternativeName>
    <domain>
        <recommendedName>
            <fullName evidence="2">Mannitol permease IIC component</fullName>
        </recommendedName>
        <alternativeName>
            <fullName evidence="2">PTS system mannitol-specific EIIC component</fullName>
        </alternativeName>
    </domain>
    <domain>
        <recommendedName>
            <fullName evidence="2">Mannitol-specific phosphotransferase enzyme IIB component</fullName>
            <ecNumber evidence="1 2">2.7.1.197</ecNumber>
        </recommendedName>
        <alternativeName>
            <fullName evidence="2">PTS system mannitol-specific EIIB component</fullName>
        </alternativeName>
    </domain>
</protein>
<comment type="function">
    <text evidence="2">The phosphoenolpyruvate-dependent sugar phosphotransferase system (sugar PTS), a major carbohydrate active transport system, catalyzes the phosphorylation of incoming sugar substrates concomitantly with their translocation across the cell membrane. The enzyme II CmtAB PTS system is involved in D-mannitol transport.</text>
</comment>
<comment type="catalytic activity">
    <reaction evidence="1 2">
        <text>D-mannitol(out) + N(pros)-phospho-L-histidyl-[protein] = D-mannitol 1-phosphate(in) + L-histidyl-[protein]</text>
        <dbReference type="Rhea" id="RHEA:33363"/>
        <dbReference type="Rhea" id="RHEA-COMP:9745"/>
        <dbReference type="Rhea" id="RHEA-COMP:9746"/>
        <dbReference type="ChEBI" id="CHEBI:16899"/>
        <dbReference type="ChEBI" id="CHEBI:29979"/>
        <dbReference type="ChEBI" id="CHEBI:61381"/>
        <dbReference type="ChEBI" id="CHEBI:64837"/>
        <dbReference type="EC" id="2.7.1.197"/>
    </reaction>
</comment>
<comment type="subunit">
    <text evidence="2">Homodimer.</text>
</comment>
<comment type="subcellular location">
    <subcellularLocation>
        <location evidence="4">Cell membrane</location>
        <topology evidence="4">Multi-pass membrane protein</topology>
    </subcellularLocation>
</comment>
<comment type="domain">
    <text evidence="4">The EIIC type-2 domain forms the PTS system translocation channel and contains the specific substrate-binding site.</text>
</comment>
<comment type="domain">
    <text evidence="3">The PTS EIIB type-2 domain is phosphorylated by phospho-EIIA on a cysteinyl residue. Then, it transfers the phosphoryl group to the sugar substrate concomitantly with the sugar uptake processed by the PTS EIIC type-2 domain.</text>
</comment>
<proteinExistence type="inferred from homology"/>